<accession>P44365</accession>
<gene>
    <name type="primary">rpmC</name>
    <name type="synonym">rpl29</name>
    <name type="ordered locus">HI_0785</name>
</gene>
<evidence type="ECO:0000305" key="1"/>
<protein>
    <recommendedName>
        <fullName evidence="1">Large ribosomal subunit protein uL29</fullName>
    </recommendedName>
    <alternativeName>
        <fullName>50S ribosomal protein L29</fullName>
    </alternativeName>
</protein>
<reference key="1">
    <citation type="journal article" date="1995" name="Science">
        <title>Whole-genome random sequencing and assembly of Haemophilus influenzae Rd.</title>
        <authorList>
            <person name="Fleischmann R.D."/>
            <person name="Adams M.D."/>
            <person name="White O."/>
            <person name="Clayton R.A."/>
            <person name="Kirkness E.F."/>
            <person name="Kerlavage A.R."/>
            <person name="Bult C.J."/>
            <person name="Tomb J.-F."/>
            <person name="Dougherty B.A."/>
            <person name="Merrick J.M."/>
            <person name="McKenney K."/>
            <person name="Sutton G.G."/>
            <person name="FitzHugh W."/>
            <person name="Fields C.A."/>
            <person name="Gocayne J.D."/>
            <person name="Scott J.D."/>
            <person name="Shirley R."/>
            <person name="Liu L.-I."/>
            <person name="Glodek A."/>
            <person name="Kelley J.M."/>
            <person name="Weidman J.F."/>
            <person name="Phillips C.A."/>
            <person name="Spriggs T."/>
            <person name="Hedblom E."/>
            <person name="Cotton M.D."/>
            <person name="Utterback T.R."/>
            <person name="Hanna M.C."/>
            <person name="Nguyen D.T."/>
            <person name="Saudek D.M."/>
            <person name="Brandon R.C."/>
            <person name="Fine L.D."/>
            <person name="Fritchman J.L."/>
            <person name="Fuhrmann J.L."/>
            <person name="Geoghagen N.S.M."/>
            <person name="Gnehm C.L."/>
            <person name="McDonald L.A."/>
            <person name="Small K.V."/>
            <person name="Fraser C.M."/>
            <person name="Smith H.O."/>
            <person name="Venter J.C."/>
        </authorList>
    </citation>
    <scope>NUCLEOTIDE SEQUENCE [LARGE SCALE GENOMIC DNA]</scope>
    <source>
        <strain>ATCC 51907 / DSM 11121 / KW20 / Rd</strain>
    </source>
</reference>
<keyword id="KW-1185">Reference proteome</keyword>
<keyword id="KW-0687">Ribonucleoprotein</keyword>
<keyword id="KW-0689">Ribosomal protein</keyword>
<organism>
    <name type="scientific">Haemophilus influenzae (strain ATCC 51907 / DSM 11121 / KW20 / Rd)</name>
    <dbReference type="NCBI Taxonomy" id="71421"/>
    <lineage>
        <taxon>Bacteria</taxon>
        <taxon>Pseudomonadati</taxon>
        <taxon>Pseudomonadota</taxon>
        <taxon>Gammaproteobacteria</taxon>
        <taxon>Pasteurellales</taxon>
        <taxon>Pasteurellaceae</taxon>
        <taxon>Haemophilus</taxon>
    </lineage>
</organism>
<feature type="chain" id="PRO_0000130398" description="Large ribosomal subunit protein uL29">
    <location>
        <begin position="1"/>
        <end position="63"/>
    </location>
</feature>
<name>RL29_HAEIN</name>
<dbReference type="EMBL" id="L42023">
    <property type="protein sequence ID" value="AAC22444.1"/>
    <property type="molecule type" value="Genomic_DNA"/>
</dbReference>
<dbReference type="PIR" id="D64093">
    <property type="entry name" value="D64093"/>
</dbReference>
<dbReference type="RefSeq" id="NP_438944.1">
    <property type="nucleotide sequence ID" value="NC_000907.1"/>
</dbReference>
<dbReference type="SMR" id="P44365"/>
<dbReference type="STRING" id="71421.HI_0785"/>
<dbReference type="EnsemblBacteria" id="AAC22444">
    <property type="protein sequence ID" value="AAC22444"/>
    <property type="gene ID" value="HI_0785"/>
</dbReference>
<dbReference type="KEGG" id="hin:HI_0785"/>
<dbReference type="PATRIC" id="fig|71421.8.peg.824"/>
<dbReference type="eggNOG" id="COG0255">
    <property type="taxonomic scope" value="Bacteria"/>
</dbReference>
<dbReference type="HOGENOM" id="CLU_158491_1_2_6"/>
<dbReference type="OrthoDB" id="9815192at2"/>
<dbReference type="PhylomeDB" id="P44365"/>
<dbReference type="BioCyc" id="HINF71421:G1GJ1-825-MONOMER"/>
<dbReference type="Proteomes" id="UP000000579">
    <property type="component" value="Chromosome"/>
</dbReference>
<dbReference type="GO" id="GO:0022625">
    <property type="term" value="C:cytosolic large ribosomal subunit"/>
    <property type="evidence" value="ECO:0000318"/>
    <property type="project" value="GO_Central"/>
</dbReference>
<dbReference type="GO" id="GO:0003735">
    <property type="term" value="F:structural constituent of ribosome"/>
    <property type="evidence" value="ECO:0007669"/>
    <property type="project" value="InterPro"/>
</dbReference>
<dbReference type="GO" id="GO:0006412">
    <property type="term" value="P:translation"/>
    <property type="evidence" value="ECO:0007669"/>
    <property type="project" value="UniProtKB-UniRule"/>
</dbReference>
<dbReference type="CDD" id="cd00427">
    <property type="entry name" value="Ribosomal_L29_HIP"/>
    <property type="match status" value="1"/>
</dbReference>
<dbReference type="FunFam" id="1.10.287.310:FF:000001">
    <property type="entry name" value="50S ribosomal protein L29"/>
    <property type="match status" value="1"/>
</dbReference>
<dbReference type="Gene3D" id="1.10.287.310">
    <property type="match status" value="1"/>
</dbReference>
<dbReference type="HAMAP" id="MF_00374">
    <property type="entry name" value="Ribosomal_uL29"/>
    <property type="match status" value="1"/>
</dbReference>
<dbReference type="InterPro" id="IPR050063">
    <property type="entry name" value="Ribosomal_protein_uL29"/>
</dbReference>
<dbReference type="InterPro" id="IPR001854">
    <property type="entry name" value="Ribosomal_uL29"/>
</dbReference>
<dbReference type="InterPro" id="IPR018254">
    <property type="entry name" value="Ribosomal_uL29_CS"/>
</dbReference>
<dbReference type="InterPro" id="IPR036049">
    <property type="entry name" value="Ribosomal_uL29_sf"/>
</dbReference>
<dbReference type="NCBIfam" id="TIGR00012">
    <property type="entry name" value="L29"/>
    <property type="match status" value="1"/>
</dbReference>
<dbReference type="PANTHER" id="PTHR10916">
    <property type="entry name" value="60S RIBOSOMAL PROTEIN L35/50S RIBOSOMAL PROTEIN L29"/>
    <property type="match status" value="1"/>
</dbReference>
<dbReference type="PANTHER" id="PTHR10916:SF0">
    <property type="entry name" value="LARGE RIBOSOMAL SUBUNIT PROTEIN UL29C"/>
    <property type="match status" value="1"/>
</dbReference>
<dbReference type="Pfam" id="PF00831">
    <property type="entry name" value="Ribosomal_L29"/>
    <property type="match status" value="1"/>
</dbReference>
<dbReference type="SUPFAM" id="SSF46561">
    <property type="entry name" value="Ribosomal protein L29 (L29p)"/>
    <property type="match status" value="1"/>
</dbReference>
<dbReference type="PROSITE" id="PS00579">
    <property type="entry name" value="RIBOSOMAL_L29"/>
    <property type="match status" value="1"/>
</dbReference>
<sequence>MKAQDLRTKSVEELNAELVNLLGEQFKLRMQTATGQLQQTHQAKQVRRDIARVKTVLTEKAGE</sequence>
<comment type="similarity">
    <text evidence="1">Belongs to the universal ribosomal protein uL29 family.</text>
</comment>
<proteinExistence type="inferred from homology"/>